<dbReference type="EMBL" id="AM180088">
    <property type="protein sequence ID" value="CAJ53106.1"/>
    <property type="molecule type" value="Genomic_DNA"/>
</dbReference>
<dbReference type="RefSeq" id="WP_011572213.1">
    <property type="nucleotide sequence ID" value="NC_008212.1"/>
</dbReference>
<dbReference type="STRING" id="362976.HQ_3004A"/>
<dbReference type="GeneID" id="4193229"/>
<dbReference type="KEGG" id="hwa:HQ_3004A"/>
<dbReference type="eggNOG" id="arCOG04477">
    <property type="taxonomic scope" value="Archaea"/>
</dbReference>
<dbReference type="HOGENOM" id="CLU_121764_0_0_2"/>
<dbReference type="Proteomes" id="UP000001975">
    <property type="component" value="Chromosome"/>
</dbReference>
<dbReference type="HAMAP" id="MF_00498">
    <property type="entry name" value="UPF0179"/>
    <property type="match status" value="1"/>
</dbReference>
<dbReference type="InterPro" id="IPR005369">
    <property type="entry name" value="UPF0179"/>
</dbReference>
<dbReference type="PANTHER" id="PTHR40699">
    <property type="entry name" value="UPF0179 PROTEIN MJ1627"/>
    <property type="match status" value="1"/>
</dbReference>
<dbReference type="PANTHER" id="PTHR40699:SF1">
    <property type="entry name" value="UPF0179 PROTEIN MJ1627"/>
    <property type="match status" value="1"/>
</dbReference>
<dbReference type="Pfam" id="PF03684">
    <property type="entry name" value="UPF0179"/>
    <property type="match status" value="1"/>
</dbReference>
<dbReference type="PIRSF" id="PIRSF006595">
    <property type="entry name" value="UCP006595"/>
    <property type="match status" value="1"/>
</dbReference>
<comment type="similarity">
    <text evidence="1">Belongs to the UPF0179 family.</text>
</comment>
<protein>
    <recommendedName>
        <fullName evidence="1">UPF0179 protein HQ_3004A</fullName>
    </recommendedName>
</protein>
<proteinExistence type="inferred from homology"/>
<name>Y3004_HALWD</name>
<accession>Q18FZ8</accession>
<keyword id="KW-1185">Reference proteome</keyword>
<organism>
    <name type="scientific">Haloquadratum walsbyi (strain DSM 16790 / HBSQ001)</name>
    <dbReference type="NCBI Taxonomy" id="362976"/>
    <lineage>
        <taxon>Archaea</taxon>
        <taxon>Methanobacteriati</taxon>
        <taxon>Methanobacteriota</taxon>
        <taxon>Stenosarchaea group</taxon>
        <taxon>Halobacteria</taxon>
        <taxon>Halobacteriales</taxon>
        <taxon>Haloferacaceae</taxon>
        <taxon>Haloquadratum</taxon>
    </lineage>
</organism>
<feature type="chain" id="PRO_0000378113" description="UPF0179 protein HQ_3004A">
    <location>
        <begin position="1"/>
        <end position="152"/>
    </location>
</feature>
<reference key="1">
    <citation type="journal article" date="2006" name="BMC Genomics">
        <title>The genome of the square archaeon Haloquadratum walsbyi: life at the limits of water activity.</title>
        <authorList>
            <person name="Bolhuis H."/>
            <person name="Palm P."/>
            <person name="Wende A."/>
            <person name="Falb M."/>
            <person name="Rampp M."/>
            <person name="Rodriguez-Valera F."/>
            <person name="Pfeiffer F."/>
            <person name="Oesterhelt D."/>
        </authorList>
    </citation>
    <scope>NUCLEOTIDE SEQUENCE [LARGE SCALE GENOMIC DNA]</scope>
    <source>
        <strain>DSM 16790 / HBSQ001</strain>
    </source>
</reference>
<evidence type="ECO:0000255" key="1">
    <source>
        <dbReference type="HAMAP-Rule" id="MF_00498"/>
    </source>
</evidence>
<gene>
    <name type="ordered locus">HQ_3004A</name>
</gene>
<sequence length="152" mass="16627">MSHVTLIGDRLASTGTEFVYEGESVACEGCPYRKQCLNLTEGVRYEITDVRDDGQLLDCAVHDTGVRAVEVEPTSVVANVATREAYAGGKAELPGSCPHTECPSHEYCVPDGAEFDTEYQIETVHGDPPHEHCQLDRELTLVEFKPPDTTSN</sequence>